<accession>Q6NIL8</accession>
<proteinExistence type="inferred from homology"/>
<comment type="function">
    <text evidence="1">Required for rescue of stalled ribosomes mediated by trans-translation. Binds to transfer-messenger RNA (tmRNA), required for stable association of tmRNA with ribosomes. tmRNA and SmpB together mimic tRNA shape, replacing the anticodon stem-loop with SmpB. tmRNA is encoded by the ssrA gene; the 2 termini fold to resemble tRNA(Ala) and it encodes a 'tag peptide', a short internal open reading frame. During trans-translation Ala-aminoacylated tmRNA acts like a tRNA, entering the A-site of stalled ribosomes, displacing the stalled mRNA. The ribosome then switches to translate the ORF on the tmRNA; the nascent peptide is terminated with the 'tag peptide' encoded by the tmRNA and targeted for degradation. The ribosome is freed to recommence translation, which seems to be the essential function of trans-translation.</text>
</comment>
<comment type="subcellular location">
    <subcellularLocation>
        <location evidence="1">Cytoplasm</location>
    </subcellularLocation>
    <text evidence="1">The tmRNA-SmpB complex associates with stalled 70S ribosomes.</text>
</comment>
<comment type="similarity">
    <text evidence="1">Belongs to the SmpB family.</text>
</comment>
<dbReference type="EMBL" id="BX248356">
    <property type="protein sequence ID" value="CAE49272.1"/>
    <property type="molecule type" value="Genomic_DNA"/>
</dbReference>
<dbReference type="RefSeq" id="WP_003850600.1">
    <property type="nucleotide sequence ID" value="NC_002935.2"/>
</dbReference>
<dbReference type="SMR" id="Q6NIL8"/>
<dbReference type="STRING" id="257309.DIP0750"/>
<dbReference type="KEGG" id="cdi:DIP0750"/>
<dbReference type="HOGENOM" id="CLU_108953_2_1_11"/>
<dbReference type="Proteomes" id="UP000002198">
    <property type="component" value="Chromosome"/>
</dbReference>
<dbReference type="GO" id="GO:0005829">
    <property type="term" value="C:cytosol"/>
    <property type="evidence" value="ECO:0007669"/>
    <property type="project" value="TreeGrafter"/>
</dbReference>
<dbReference type="GO" id="GO:0003723">
    <property type="term" value="F:RNA binding"/>
    <property type="evidence" value="ECO:0007669"/>
    <property type="project" value="UniProtKB-UniRule"/>
</dbReference>
<dbReference type="GO" id="GO:0070929">
    <property type="term" value="P:trans-translation"/>
    <property type="evidence" value="ECO:0007669"/>
    <property type="project" value="UniProtKB-UniRule"/>
</dbReference>
<dbReference type="CDD" id="cd09294">
    <property type="entry name" value="SmpB"/>
    <property type="match status" value="1"/>
</dbReference>
<dbReference type="Gene3D" id="2.40.280.10">
    <property type="match status" value="1"/>
</dbReference>
<dbReference type="HAMAP" id="MF_00023">
    <property type="entry name" value="SmpB"/>
    <property type="match status" value="1"/>
</dbReference>
<dbReference type="InterPro" id="IPR023620">
    <property type="entry name" value="SmpB"/>
</dbReference>
<dbReference type="InterPro" id="IPR000037">
    <property type="entry name" value="SsrA-bd_prot"/>
</dbReference>
<dbReference type="InterPro" id="IPR020081">
    <property type="entry name" value="SsrA-bd_prot_CS"/>
</dbReference>
<dbReference type="NCBIfam" id="NF003843">
    <property type="entry name" value="PRK05422.1"/>
    <property type="match status" value="1"/>
</dbReference>
<dbReference type="NCBIfam" id="TIGR00086">
    <property type="entry name" value="smpB"/>
    <property type="match status" value="1"/>
</dbReference>
<dbReference type="PANTHER" id="PTHR30308:SF2">
    <property type="entry name" value="SSRA-BINDING PROTEIN"/>
    <property type="match status" value="1"/>
</dbReference>
<dbReference type="PANTHER" id="PTHR30308">
    <property type="entry name" value="TMRNA-BINDING COMPONENT OF TRANS-TRANSLATION TAGGING COMPLEX"/>
    <property type="match status" value="1"/>
</dbReference>
<dbReference type="Pfam" id="PF01668">
    <property type="entry name" value="SmpB"/>
    <property type="match status" value="1"/>
</dbReference>
<dbReference type="SUPFAM" id="SSF74982">
    <property type="entry name" value="Small protein B (SmpB)"/>
    <property type="match status" value="1"/>
</dbReference>
<dbReference type="PROSITE" id="PS01317">
    <property type="entry name" value="SSRP"/>
    <property type="match status" value="1"/>
</dbReference>
<organism>
    <name type="scientific">Corynebacterium diphtheriae (strain ATCC 700971 / NCTC 13129 / Biotype gravis)</name>
    <dbReference type="NCBI Taxonomy" id="257309"/>
    <lineage>
        <taxon>Bacteria</taxon>
        <taxon>Bacillati</taxon>
        <taxon>Actinomycetota</taxon>
        <taxon>Actinomycetes</taxon>
        <taxon>Mycobacteriales</taxon>
        <taxon>Corynebacteriaceae</taxon>
        <taxon>Corynebacterium</taxon>
    </lineage>
</organism>
<reference key="1">
    <citation type="journal article" date="2003" name="Nucleic Acids Res.">
        <title>The complete genome sequence and analysis of Corynebacterium diphtheriae NCTC13129.</title>
        <authorList>
            <person name="Cerdeno-Tarraga A.-M."/>
            <person name="Efstratiou A."/>
            <person name="Dover L.G."/>
            <person name="Holden M.T.G."/>
            <person name="Pallen M.J."/>
            <person name="Bentley S.D."/>
            <person name="Besra G.S."/>
            <person name="Churcher C.M."/>
            <person name="James K.D."/>
            <person name="De Zoysa A."/>
            <person name="Chillingworth T."/>
            <person name="Cronin A."/>
            <person name="Dowd L."/>
            <person name="Feltwell T."/>
            <person name="Hamlin N."/>
            <person name="Holroyd S."/>
            <person name="Jagels K."/>
            <person name="Moule S."/>
            <person name="Quail M.A."/>
            <person name="Rabbinowitsch E."/>
            <person name="Rutherford K.M."/>
            <person name="Thomson N.R."/>
            <person name="Unwin L."/>
            <person name="Whitehead S."/>
            <person name="Barrell B.G."/>
            <person name="Parkhill J."/>
        </authorList>
    </citation>
    <scope>NUCLEOTIDE SEQUENCE [LARGE SCALE GENOMIC DNA]</scope>
    <source>
        <strain>ATCC 700971 / NCTC 13129 / Biotype gravis</strain>
    </source>
</reference>
<keyword id="KW-0963">Cytoplasm</keyword>
<keyword id="KW-1185">Reference proteome</keyword>
<keyword id="KW-0694">RNA-binding</keyword>
<name>SSRP_CORDI</name>
<protein>
    <recommendedName>
        <fullName evidence="1">SsrA-binding protein</fullName>
    </recommendedName>
    <alternativeName>
        <fullName evidence="1">Small protein B</fullName>
    </alternativeName>
</protein>
<evidence type="ECO:0000255" key="1">
    <source>
        <dbReference type="HAMAP-Rule" id="MF_00023"/>
    </source>
</evidence>
<sequence>MAKKKKAKNSNPVIASNRKARHDYKILDTFECGIVLLGTEIKSIREGKVSLTDSFATIDEGEAWIRNLNIPIYSRGSWTNHSPMRTRKLLLHRREIDSLMGKVRDGNKTLVPLSLYFKEGRLKVELGLAQGKQDYDKRQDIKRRTEEREVVRDLGRRVKGIHA</sequence>
<feature type="chain" id="PRO_0000102937" description="SsrA-binding protein">
    <location>
        <begin position="1"/>
        <end position="163"/>
    </location>
</feature>
<gene>
    <name evidence="1" type="primary">smpB</name>
    <name type="ordered locus">DIP0750</name>
</gene>